<evidence type="ECO:0000255" key="1">
    <source>
        <dbReference type="HAMAP-Rule" id="MF_00412"/>
    </source>
</evidence>
<evidence type="ECO:0007829" key="2">
    <source>
        <dbReference type="PDB" id="4GHK"/>
    </source>
</evidence>
<organism>
    <name type="scientific">Burkholderia thailandensis (strain ATCC 700388 / DSM 13276 / CCUG 48851 / CIP 106301 / E264)</name>
    <dbReference type="NCBI Taxonomy" id="271848"/>
    <lineage>
        <taxon>Bacteria</taxon>
        <taxon>Pseudomonadati</taxon>
        <taxon>Pseudomonadota</taxon>
        <taxon>Betaproteobacteria</taxon>
        <taxon>Burkholderiales</taxon>
        <taxon>Burkholderiaceae</taxon>
        <taxon>Burkholderia</taxon>
        <taxon>pseudomallei group</taxon>
    </lineage>
</organism>
<gene>
    <name evidence="1" type="primary">proA</name>
    <name type="ordered locus">BTH_I1214</name>
</gene>
<sequence>MDIDQYMTDVGRRARRASRSIARASTAAKNAALEAVARAIERDAGALKAANARDVARAKDKGLDAAFVDRLTLSDKALKTMVEGLRQVATLPDPIGEMSNLKYRPSGIQVGQMRVPLGVIGIIYESRPNVTIDAAALCLKSGNATILRGGSEALESNTALAKLIGEGLAEAGLPQDTVQVVETADRAAVGRLITMTEYVDVIVPRGGKSLIERLINEARVPMIKHLDGICHVYVDDRASVTKALTVCDNAKTHRYGTCNTMETLLVARGIAPAVLSPLGRLYREKGVELRVDADARAVLEAAGVGPLVDATDEDWRTEYLAPVLAIKIVDGIDAAIEHINEYGSHHTDAIVTEDHDRAMRFLREVDSASVMVNASTRFADGFEFGLGAEIGISNDKLHARGPVGLEGLTSLKYVVLGHGEGRQ</sequence>
<name>PROA_BURTA</name>
<comment type="function">
    <text evidence="1">Catalyzes the NADPH-dependent reduction of L-glutamate 5-phosphate into L-glutamate 5-semialdehyde and phosphate. The product spontaneously undergoes cyclization to form 1-pyrroline-5-carboxylate.</text>
</comment>
<comment type="catalytic activity">
    <reaction evidence="1">
        <text>L-glutamate 5-semialdehyde + phosphate + NADP(+) = L-glutamyl 5-phosphate + NADPH + H(+)</text>
        <dbReference type="Rhea" id="RHEA:19541"/>
        <dbReference type="ChEBI" id="CHEBI:15378"/>
        <dbReference type="ChEBI" id="CHEBI:43474"/>
        <dbReference type="ChEBI" id="CHEBI:57783"/>
        <dbReference type="ChEBI" id="CHEBI:58066"/>
        <dbReference type="ChEBI" id="CHEBI:58274"/>
        <dbReference type="ChEBI" id="CHEBI:58349"/>
        <dbReference type="EC" id="1.2.1.41"/>
    </reaction>
</comment>
<comment type="pathway">
    <text evidence="1">Amino-acid biosynthesis; L-proline biosynthesis; L-glutamate 5-semialdehyde from L-glutamate: step 2/2.</text>
</comment>
<comment type="subcellular location">
    <subcellularLocation>
        <location evidence="1">Cytoplasm</location>
    </subcellularLocation>
</comment>
<comment type="similarity">
    <text evidence="1">Belongs to the gamma-glutamyl phosphate reductase family.</text>
</comment>
<protein>
    <recommendedName>
        <fullName evidence="1">Gamma-glutamyl phosphate reductase</fullName>
        <shortName evidence="1">GPR</shortName>
        <ecNumber evidence="1">1.2.1.41</ecNumber>
    </recommendedName>
    <alternativeName>
        <fullName evidence="1">Glutamate-5-semialdehyde dehydrogenase</fullName>
    </alternativeName>
    <alternativeName>
        <fullName evidence="1">Glutamyl-gamma-semialdehyde dehydrogenase</fullName>
        <shortName evidence="1">GSA dehydrogenase</shortName>
    </alternativeName>
</protein>
<dbReference type="EC" id="1.2.1.41" evidence="1"/>
<dbReference type="EMBL" id="CP000086">
    <property type="protein sequence ID" value="ABC38329.1"/>
    <property type="molecule type" value="Genomic_DNA"/>
</dbReference>
<dbReference type="RefSeq" id="WP_009889061.1">
    <property type="nucleotide sequence ID" value="NZ_CP008785.1"/>
</dbReference>
<dbReference type="PDB" id="4GHK">
    <property type="method" value="X-ray"/>
    <property type="resolution" value="2.25 A"/>
    <property type="chains" value="A/B/C/D=1-423"/>
</dbReference>
<dbReference type="PDBsum" id="4GHK"/>
<dbReference type="SMR" id="Q2SZ88"/>
<dbReference type="KEGG" id="bte:BTH_I1214"/>
<dbReference type="HOGENOM" id="CLU_030231_0_0_4"/>
<dbReference type="UniPathway" id="UPA00098">
    <property type="reaction ID" value="UER00360"/>
</dbReference>
<dbReference type="EvolutionaryTrace" id="Q2SZ88"/>
<dbReference type="Proteomes" id="UP000001930">
    <property type="component" value="Chromosome I"/>
</dbReference>
<dbReference type="GO" id="GO:0005737">
    <property type="term" value="C:cytoplasm"/>
    <property type="evidence" value="ECO:0007669"/>
    <property type="project" value="UniProtKB-SubCell"/>
</dbReference>
<dbReference type="GO" id="GO:0004350">
    <property type="term" value="F:glutamate-5-semialdehyde dehydrogenase activity"/>
    <property type="evidence" value="ECO:0007669"/>
    <property type="project" value="UniProtKB-UniRule"/>
</dbReference>
<dbReference type="GO" id="GO:0050661">
    <property type="term" value="F:NADP binding"/>
    <property type="evidence" value="ECO:0007669"/>
    <property type="project" value="InterPro"/>
</dbReference>
<dbReference type="GO" id="GO:0055129">
    <property type="term" value="P:L-proline biosynthetic process"/>
    <property type="evidence" value="ECO:0007669"/>
    <property type="project" value="UniProtKB-UniRule"/>
</dbReference>
<dbReference type="CDD" id="cd07079">
    <property type="entry name" value="ALDH_F18-19_ProA-GPR"/>
    <property type="match status" value="1"/>
</dbReference>
<dbReference type="FunFam" id="3.40.309.10:FF:000006">
    <property type="entry name" value="Gamma-glutamyl phosphate reductase"/>
    <property type="match status" value="1"/>
</dbReference>
<dbReference type="Gene3D" id="3.40.605.10">
    <property type="entry name" value="Aldehyde Dehydrogenase, Chain A, domain 1"/>
    <property type="match status" value="1"/>
</dbReference>
<dbReference type="Gene3D" id="3.40.309.10">
    <property type="entry name" value="Aldehyde Dehydrogenase, Chain A, domain 2"/>
    <property type="match status" value="1"/>
</dbReference>
<dbReference type="HAMAP" id="MF_00412">
    <property type="entry name" value="ProA"/>
    <property type="match status" value="1"/>
</dbReference>
<dbReference type="InterPro" id="IPR016161">
    <property type="entry name" value="Ald_DH/histidinol_DH"/>
</dbReference>
<dbReference type="InterPro" id="IPR016163">
    <property type="entry name" value="Ald_DH_C"/>
</dbReference>
<dbReference type="InterPro" id="IPR016162">
    <property type="entry name" value="Ald_DH_N"/>
</dbReference>
<dbReference type="InterPro" id="IPR015590">
    <property type="entry name" value="Aldehyde_DH_dom"/>
</dbReference>
<dbReference type="InterPro" id="IPR020593">
    <property type="entry name" value="G-glutamylP_reductase_CS"/>
</dbReference>
<dbReference type="InterPro" id="IPR012134">
    <property type="entry name" value="Glu-5-SA_DH"/>
</dbReference>
<dbReference type="InterPro" id="IPR000965">
    <property type="entry name" value="GPR_dom"/>
</dbReference>
<dbReference type="NCBIfam" id="NF001221">
    <property type="entry name" value="PRK00197.1"/>
    <property type="match status" value="1"/>
</dbReference>
<dbReference type="NCBIfam" id="TIGR00407">
    <property type="entry name" value="proA"/>
    <property type="match status" value="1"/>
</dbReference>
<dbReference type="PANTHER" id="PTHR11063:SF8">
    <property type="entry name" value="DELTA-1-PYRROLINE-5-CARBOXYLATE SYNTHASE"/>
    <property type="match status" value="1"/>
</dbReference>
<dbReference type="PANTHER" id="PTHR11063">
    <property type="entry name" value="GLUTAMATE SEMIALDEHYDE DEHYDROGENASE"/>
    <property type="match status" value="1"/>
</dbReference>
<dbReference type="Pfam" id="PF00171">
    <property type="entry name" value="Aldedh"/>
    <property type="match status" value="1"/>
</dbReference>
<dbReference type="PIRSF" id="PIRSF000151">
    <property type="entry name" value="GPR"/>
    <property type="match status" value="1"/>
</dbReference>
<dbReference type="SUPFAM" id="SSF53720">
    <property type="entry name" value="ALDH-like"/>
    <property type="match status" value="1"/>
</dbReference>
<dbReference type="PROSITE" id="PS01223">
    <property type="entry name" value="PROA"/>
    <property type="match status" value="1"/>
</dbReference>
<keyword id="KW-0002">3D-structure</keyword>
<keyword id="KW-0028">Amino-acid biosynthesis</keyword>
<keyword id="KW-0963">Cytoplasm</keyword>
<keyword id="KW-0521">NADP</keyword>
<keyword id="KW-0560">Oxidoreductase</keyword>
<keyword id="KW-0641">Proline biosynthesis</keyword>
<reference key="1">
    <citation type="journal article" date="2005" name="BMC Genomics">
        <title>Bacterial genome adaptation to niches: divergence of the potential virulence genes in three Burkholderia species of different survival strategies.</title>
        <authorList>
            <person name="Kim H.S."/>
            <person name="Schell M.A."/>
            <person name="Yu Y."/>
            <person name="Ulrich R.L."/>
            <person name="Sarria S.H."/>
            <person name="Nierman W.C."/>
            <person name="DeShazer D."/>
        </authorList>
    </citation>
    <scope>NUCLEOTIDE SEQUENCE [LARGE SCALE GENOMIC DNA]</scope>
    <source>
        <strain>ATCC 700388 / DSM 13276 / CCUG 48851 / CIP 106301 / E264</strain>
    </source>
</reference>
<proteinExistence type="evidence at protein level"/>
<accession>Q2SZ88</accession>
<feature type="chain" id="PRO_0000252566" description="Gamma-glutamyl phosphate reductase">
    <location>
        <begin position="1"/>
        <end position="423"/>
    </location>
</feature>
<feature type="helix" evidence="2">
    <location>
        <begin position="3"/>
        <end position="23"/>
    </location>
</feature>
<feature type="helix" evidence="2">
    <location>
        <begin position="26"/>
        <end position="42"/>
    </location>
</feature>
<feature type="helix" evidence="2">
    <location>
        <begin position="44"/>
        <end position="55"/>
    </location>
</feature>
<feature type="helix" evidence="2">
    <location>
        <begin position="67"/>
        <end position="71"/>
    </location>
</feature>
<feature type="helix" evidence="2">
    <location>
        <begin position="77"/>
        <end position="90"/>
    </location>
</feature>
<feature type="strand" evidence="2">
    <location>
        <begin position="98"/>
        <end position="103"/>
    </location>
</feature>
<feature type="strand" evidence="2">
    <location>
        <begin position="109"/>
        <end position="116"/>
    </location>
</feature>
<feature type="strand" evidence="2">
    <location>
        <begin position="118"/>
        <end position="123"/>
    </location>
</feature>
<feature type="helix" evidence="2">
    <location>
        <begin position="128"/>
        <end position="140"/>
    </location>
</feature>
<feature type="strand" evidence="2">
    <location>
        <begin position="144"/>
        <end position="148"/>
    </location>
</feature>
<feature type="helix" evidence="2">
    <location>
        <begin position="151"/>
        <end position="153"/>
    </location>
</feature>
<feature type="helix" evidence="2">
    <location>
        <begin position="154"/>
        <end position="170"/>
    </location>
</feature>
<feature type="helix" evidence="2">
    <location>
        <begin position="175"/>
        <end position="177"/>
    </location>
</feature>
<feature type="strand" evidence="2">
    <location>
        <begin position="178"/>
        <end position="180"/>
    </location>
</feature>
<feature type="helix" evidence="2">
    <location>
        <begin position="187"/>
        <end position="192"/>
    </location>
</feature>
<feature type="turn" evidence="2">
    <location>
        <begin position="196"/>
        <end position="198"/>
    </location>
</feature>
<feature type="strand" evidence="2">
    <location>
        <begin position="200"/>
        <end position="204"/>
    </location>
</feature>
<feature type="helix" evidence="2">
    <location>
        <begin position="208"/>
        <end position="217"/>
    </location>
</feature>
<feature type="strand" evidence="2">
    <location>
        <begin position="231"/>
        <end position="234"/>
    </location>
</feature>
<feature type="helix" evidence="2">
    <location>
        <begin position="240"/>
        <end position="246"/>
    </location>
</feature>
<feature type="strand" evidence="2">
    <location>
        <begin position="263"/>
        <end position="267"/>
    </location>
</feature>
<feature type="helix" evidence="2">
    <location>
        <begin position="268"/>
        <end position="270"/>
    </location>
</feature>
<feature type="helix" evidence="2">
    <location>
        <begin position="271"/>
        <end position="284"/>
    </location>
</feature>
<feature type="strand" evidence="2">
    <location>
        <begin position="288"/>
        <end position="291"/>
    </location>
</feature>
<feature type="helix" evidence="2">
    <location>
        <begin position="293"/>
        <end position="301"/>
    </location>
</feature>
<feature type="helix" evidence="2">
    <location>
        <begin position="313"/>
        <end position="315"/>
    </location>
</feature>
<feature type="strand" evidence="2">
    <location>
        <begin position="323"/>
        <end position="331"/>
    </location>
</feature>
<feature type="helix" evidence="2">
    <location>
        <begin position="332"/>
        <end position="342"/>
    </location>
</feature>
<feature type="strand" evidence="2">
    <location>
        <begin position="345"/>
        <end position="351"/>
    </location>
</feature>
<feature type="helix" evidence="2">
    <location>
        <begin position="355"/>
        <end position="364"/>
    </location>
</feature>
<feature type="strand" evidence="2">
    <location>
        <begin position="367"/>
        <end position="374"/>
    </location>
</feature>
<feature type="helix" evidence="2">
    <location>
        <begin position="376"/>
        <end position="378"/>
    </location>
</feature>
<feature type="turn" evidence="2">
    <location>
        <begin position="381"/>
        <end position="385"/>
    </location>
</feature>
<feature type="strand" evidence="2">
    <location>
        <begin position="390"/>
        <end position="393"/>
    </location>
</feature>
<feature type="strand" evidence="2">
    <location>
        <begin position="396"/>
        <end position="398"/>
    </location>
</feature>
<feature type="strand" evidence="2">
    <location>
        <begin position="401"/>
        <end position="403"/>
    </location>
</feature>
<feature type="helix" evidence="2">
    <location>
        <begin position="405"/>
        <end position="408"/>
    </location>
</feature>
<feature type="strand" evidence="2">
    <location>
        <begin position="409"/>
        <end position="420"/>
    </location>
</feature>